<reference key="1">
    <citation type="journal article" date="2005" name="Proc. Natl. Acad. Sci. U.S.A.">
        <title>Complete genome sequence of the probiotic lactic acid bacterium Lactobacillus acidophilus NCFM.</title>
        <authorList>
            <person name="Altermann E."/>
            <person name="Russell W.M."/>
            <person name="Azcarate-Peril M.A."/>
            <person name="Barrangou R."/>
            <person name="Buck B.L."/>
            <person name="McAuliffe O."/>
            <person name="Souther N."/>
            <person name="Dobson A."/>
            <person name="Duong T."/>
            <person name="Callanan M."/>
            <person name="Lick S."/>
            <person name="Hamrick A."/>
            <person name="Cano R."/>
            <person name="Klaenhammer T.R."/>
        </authorList>
    </citation>
    <scope>NUCLEOTIDE SEQUENCE [LARGE SCALE GENOMIC DNA]</scope>
    <source>
        <strain>ATCC 700396 / NCK56 / N2 / NCFM</strain>
    </source>
</reference>
<protein>
    <recommendedName>
        <fullName evidence="1">Glycerol-3-phosphate acyltransferase 1</fullName>
    </recommendedName>
    <alternativeName>
        <fullName evidence="1">Acyl-PO4 G3P acyltransferase 1</fullName>
    </alternativeName>
    <alternativeName>
        <fullName evidence="1">Acyl-phosphate--glycerol-3-phosphate acyltransferase 1</fullName>
    </alternativeName>
    <alternativeName>
        <fullName evidence="1">G3P acyltransferase 1</fullName>
        <shortName evidence="1">GPAT 1</shortName>
        <ecNumber evidence="1">2.3.1.275</ecNumber>
    </alternativeName>
    <alternativeName>
        <fullName evidence="1">Lysophosphatidic acid synthase 1</fullName>
        <shortName evidence="1">LPA synthase 1</shortName>
    </alternativeName>
</protein>
<proteinExistence type="inferred from homology"/>
<keyword id="KW-1003">Cell membrane</keyword>
<keyword id="KW-0444">Lipid biosynthesis</keyword>
<keyword id="KW-0443">Lipid metabolism</keyword>
<keyword id="KW-0472">Membrane</keyword>
<keyword id="KW-0594">Phospholipid biosynthesis</keyword>
<keyword id="KW-1208">Phospholipid metabolism</keyword>
<keyword id="KW-1185">Reference proteome</keyword>
<keyword id="KW-0808">Transferase</keyword>
<keyword id="KW-0812">Transmembrane</keyword>
<keyword id="KW-1133">Transmembrane helix</keyword>
<feature type="chain" id="PRO_0000188385" description="Glycerol-3-phosphate acyltransferase 1">
    <location>
        <begin position="1"/>
        <end position="205"/>
    </location>
</feature>
<feature type="transmembrane region" description="Helical" evidence="1">
    <location>
        <begin position="7"/>
        <end position="27"/>
    </location>
</feature>
<feature type="transmembrane region" description="Helical" evidence="1">
    <location>
        <begin position="52"/>
        <end position="74"/>
    </location>
</feature>
<feature type="transmembrane region" description="Helical" evidence="1">
    <location>
        <begin position="78"/>
        <end position="100"/>
    </location>
</feature>
<feature type="transmembrane region" description="Helical" evidence="1">
    <location>
        <begin position="125"/>
        <end position="145"/>
    </location>
</feature>
<feature type="transmembrane region" description="Helical" evidence="1">
    <location>
        <begin position="160"/>
        <end position="180"/>
    </location>
</feature>
<gene>
    <name evidence="1" type="primary">plsY1</name>
    <name type="ordered locus">LBA0189</name>
</gene>
<name>PLSY1_LACAC</name>
<accession>Q5FMI9</accession>
<dbReference type="EC" id="2.3.1.275" evidence="1"/>
<dbReference type="EMBL" id="CP000033">
    <property type="protein sequence ID" value="AAV42085.1"/>
    <property type="molecule type" value="Genomic_DNA"/>
</dbReference>
<dbReference type="RefSeq" id="WP_003548818.1">
    <property type="nucleotide sequence ID" value="NC_006814.3"/>
</dbReference>
<dbReference type="RefSeq" id="YP_193116.1">
    <property type="nucleotide sequence ID" value="NC_006814.3"/>
</dbReference>
<dbReference type="SMR" id="Q5FMI9"/>
<dbReference type="STRING" id="272621.LBA0189"/>
<dbReference type="KEGG" id="lac:LBA0189"/>
<dbReference type="PATRIC" id="fig|272621.13.peg.180"/>
<dbReference type="eggNOG" id="COG0344">
    <property type="taxonomic scope" value="Bacteria"/>
</dbReference>
<dbReference type="HOGENOM" id="CLU_081254_5_0_9"/>
<dbReference type="OrthoDB" id="9777124at2"/>
<dbReference type="BioCyc" id="LACI272621:G1G49-182-MONOMER"/>
<dbReference type="UniPathway" id="UPA00085"/>
<dbReference type="Proteomes" id="UP000006381">
    <property type="component" value="Chromosome"/>
</dbReference>
<dbReference type="GO" id="GO:0005886">
    <property type="term" value="C:plasma membrane"/>
    <property type="evidence" value="ECO:0007669"/>
    <property type="project" value="UniProtKB-SubCell"/>
</dbReference>
<dbReference type="GO" id="GO:0043772">
    <property type="term" value="F:acyl-phosphate glycerol-3-phosphate acyltransferase activity"/>
    <property type="evidence" value="ECO:0007669"/>
    <property type="project" value="UniProtKB-UniRule"/>
</dbReference>
<dbReference type="GO" id="GO:0008654">
    <property type="term" value="P:phospholipid biosynthetic process"/>
    <property type="evidence" value="ECO:0007669"/>
    <property type="project" value="UniProtKB-UniRule"/>
</dbReference>
<dbReference type="HAMAP" id="MF_01043">
    <property type="entry name" value="PlsY"/>
    <property type="match status" value="1"/>
</dbReference>
<dbReference type="InterPro" id="IPR003811">
    <property type="entry name" value="G3P_acylTferase_PlsY"/>
</dbReference>
<dbReference type="NCBIfam" id="NF010987">
    <property type="entry name" value="PRK14411.1"/>
    <property type="match status" value="1"/>
</dbReference>
<dbReference type="PANTHER" id="PTHR30309:SF0">
    <property type="entry name" value="GLYCEROL-3-PHOSPHATE ACYLTRANSFERASE-RELATED"/>
    <property type="match status" value="1"/>
</dbReference>
<dbReference type="PANTHER" id="PTHR30309">
    <property type="entry name" value="INNER MEMBRANE PROTEIN YGIH"/>
    <property type="match status" value="1"/>
</dbReference>
<dbReference type="Pfam" id="PF02660">
    <property type="entry name" value="G3P_acyltransf"/>
    <property type="match status" value="1"/>
</dbReference>
<dbReference type="SMART" id="SM01207">
    <property type="entry name" value="G3P_acyltransf"/>
    <property type="match status" value="1"/>
</dbReference>
<organism>
    <name type="scientific">Lactobacillus acidophilus (strain ATCC 700396 / NCK56 / N2 / NCFM)</name>
    <dbReference type="NCBI Taxonomy" id="272621"/>
    <lineage>
        <taxon>Bacteria</taxon>
        <taxon>Bacillati</taxon>
        <taxon>Bacillota</taxon>
        <taxon>Bacilli</taxon>
        <taxon>Lactobacillales</taxon>
        <taxon>Lactobacillaceae</taxon>
        <taxon>Lactobacillus</taxon>
    </lineage>
</organism>
<comment type="function">
    <text evidence="1">Catalyzes the transfer of an acyl group from acyl-phosphate (acyl-PO(4)) to glycerol-3-phosphate (G3P) to form lysophosphatidic acid (LPA). This enzyme utilizes acyl-phosphate as fatty acyl donor, but not acyl-CoA or acyl-ACP.</text>
</comment>
<comment type="catalytic activity">
    <reaction evidence="1">
        <text>an acyl phosphate + sn-glycerol 3-phosphate = a 1-acyl-sn-glycero-3-phosphate + phosphate</text>
        <dbReference type="Rhea" id="RHEA:34075"/>
        <dbReference type="ChEBI" id="CHEBI:43474"/>
        <dbReference type="ChEBI" id="CHEBI:57597"/>
        <dbReference type="ChEBI" id="CHEBI:57970"/>
        <dbReference type="ChEBI" id="CHEBI:59918"/>
        <dbReference type="EC" id="2.3.1.275"/>
    </reaction>
</comment>
<comment type="pathway">
    <text evidence="1">Lipid metabolism; phospholipid metabolism.</text>
</comment>
<comment type="subunit">
    <text evidence="1">Probably interacts with PlsX.</text>
</comment>
<comment type="subcellular location">
    <subcellularLocation>
        <location evidence="1">Cell membrane</location>
        <topology evidence="1">Multi-pass membrane protein</topology>
    </subcellularLocation>
</comment>
<comment type="similarity">
    <text evidence="1">Belongs to the PlsY family.</text>
</comment>
<sequence>MARIYATLIGYVFGNFLTAMIVGKLFLKINPTEYGSHNPGTANMGAVFGKKWGILTCLGDLLKSLIALFIVYFVFPGHINIAYAGLGLILGHCFPIWNHFKGGKGVAVSAQVAVFYDWRAGLATLLIALILTAIMQNLTIPPLVFMLLFSVYEFWQNQEAGIVFMVITLIMVYKFWQDIIDFFTGHGKRVDILYSIKKKLGIKSE</sequence>
<evidence type="ECO:0000255" key="1">
    <source>
        <dbReference type="HAMAP-Rule" id="MF_01043"/>
    </source>
</evidence>